<name>GRPE_VIBHA</name>
<protein>
    <recommendedName>
        <fullName evidence="1">Protein GrpE</fullName>
    </recommendedName>
    <alternativeName>
        <fullName evidence="1">HSP-70 cofactor</fullName>
    </alternativeName>
</protein>
<gene>
    <name evidence="1" type="primary">grpE</name>
</gene>
<feature type="chain" id="PRO_0000113892" description="Protein GrpE">
    <location>
        <begin position="1"/>
        <end position="198"/>
    </location>
</feature>
<evidence type="ECO:0000255" key="1">
    <source>
        <dbReference type="HAMAP-Rule" id="MF_01151"/>
    </source>
</evidence>
<keyword id="KW-0143">Chaperone</keyword>
<keyword id="KW-0963">Cytoplasm</keyword>
<keyword id="KW-0346">Stress response</keyword>
<accession>Q6IT00</accession>
<dbReference type="EMBL" id="AY639008">
    <property type="protein sequence ID" value="AAT39534.1"/>
    <property type="molecule type" value="Genomic_DNA"/>
</dbReference>
<dbReference type="RefSeq" id="WP_005447652.1">
    <property type="nucleotide sequence ID" value="NZ_AP031614.1"/>
</dbReference>
<dbReference type="SMR" id="Q6IT00"/>
<dbReference type="STRING" id="669.AL538_12720"/>
<dbReference type="GeneID" id="47657617"/>
<dbReference type="GeneID" id="83582755"/>
<dbReference type="OrthoDB" id="9789811at2"/>
<dbReference type="GO" id="GO:0005829">
    <property type="term" value="C:cytosol"/>
    <property type="evidence" value="ECO:0007669"/>
    <property type="project" value="TreeGrafter"/>
</dbReference>
<dbReference type="GO" id="GO:0000774">
    <property type="term" value="F:adenyl-nucleotide exchange factor activity"/>
    <property type="evidence" value="ECO:0007669"/>
    <property type="project" value="InterPro"/>
</dbReference>
<dbReference type="GO" id="GO:0042803">
    <property type="term" value="F:protein homodimerization activity"/>
    <property type="evidence" value="ECO:0007669"/>
    <property type="project" value="InterPro"/>
</dbReference>
<dbReference type="GO" id="GO:0051087">
    <property type="term" value="F:protein-folding chaperone binding"/>
    <property type="evidence" value="ECO:0007669"/>
    <property type="project" value="InterPro"/>
</dbReference>
<dbReference type="GO" id="GO:0051082">
    <property type="term" value="F:unfolded protein binding"/>
    <property type="evidence" value="ECO:0007669"/>
    <property type="project" value="TreeGrafter"/>
</dbReference>
<dbReference type="GO" id="GO:0006457">
    <property type="term" value="P:protein folding"/>
    <property type="evidence" value="ECO:0007669"/>
    <property type="project" value="InterPro"/>
</dbReference>
<dbReference type="CDD" id="cd00446">
    <property type="entry name" value="GrpE"/>
    <property type="match status" value="1"/>
</dbReference>
<dbReference type="FunFam" id="2.30.22.10:FF:000001">
    <property type="entry name" value="Protein GrpE"/>
    <property type="match status" value="1"/>
</dbReference>
<dbReference type="Gene3D" id="3.90.20.20">
    <property type="match status" value="1"/>
</dbReference>
<dbReference type="Gene3D" id="2.30.22.10">
    <property type="entry name" value="Head domain of nucleotide exchange factor GrpE"/>
    <property type="match status" value="1"/>
</dbReference>
<dbReference type="HAMAP" id="MF_01151">
    <property type="entry name" value="GrpE"/>
    <property type="match status" value="1"/>
</dbReference>
<dbReference type="InterPro" id="IPR000740">
    <property type="entry name" value="GrpE"/>
</dbReference>
<dbReference type="InterPro" id="IPR013805">
    <property type="entry name" value="GrpE_coiled_coil"/>
</dbReference>
<dbReference type="InterPro" id="IPR009012">
    <property type="entry name" value="GrpE_head"/>
</dbReference>
<dbReference type="NCBIfam" id="NF010737">
    <property type="entry name" value="PRK14139.1"/>
    <property type="match status" value="1"/>
</dbReference>
<dbReference type="NCBIfam" id="NF010738">
    <property type="entry name" value="PRK14140.1"/>
    <property type="match status" value="1"/>
</dbReference>
<dbReference type="NCBIfam" id="NF010748">
    <property type="entry name" value="PRK14150.1"/>
    <property type="match status" value="1"/>
</dbReference>
<dbReference type="PANTHER" id="PTHR21237">
    <property type="entry name" value="GRPE PROTEIN"/>
    <property type="match status" value="1"/>
</dbReference>
<dbReference type="PANTHER" id="PTHR21237:SF23">
    <property type="entry name" value="GRPE PROTEIN HOMOLOG, MITOCHONDRIAL"/>
    <property type="match status" value="1"/>
</dbReference>
<dbReference type="Pfam" id="PF01025">
    <property type="entry name" value="GrpE"/>
    <property type="match status" value="1"/>
</dbReference>
<dbReference type="PRINTS" id="PR00773">
    <property type="entry name" value="GRPEPROTEIN"/>
</dbReference>
<dbReference type="SUPFAM" id="SSF58014">
    <property type="entry name" value="Coiled-coil domain of nucleotide exchange factor GrpE"/>
    <property type="match status" value="1"/>
</dbReference>
<dbReference type="SUPFAM" id="SSF51064">
    <property type="entry name" value="Head domain of nucleotide exchange factor GrpE"/>
    <property type="match status" value="1"/>
</dbReference>
<dbReference type="PROSITE" id="PS01071">
    <property type="entry name" value="GRPE"/>
    <property type="match status" value="1"/>
</dbReference>
<reference key="1">
    <citation type="journal article" date="1998" name="Mol. Gen. Genet.">
        <title>Cloning and characterization of the dnaK heat shock operon of the marine bacterium Vibrio harveyi.</title>
        <authorList>
            <person name="Klein G."/>
            <person name="Zmijewski M."/>
            <person name="Krzewska J."/>
            <person name="Czeczatka M."/>
            <person name="Lipinska B."/>
        </authorList>
    </citation>
    <scope>NUCLEOTIDE SEQUENCE [GENOMIC DNA]</scope>
</reference>
<sequence>MSNEENKVTEEELDQIIEEAEKVEAAAQEAEAELEEIGDEKDAKIAQLEAALLSSETKVKDQQDAVLRSKAEVENMRRRTEQEIDKARKYALNKFAEELLPVIDNLERAIQAADAEHEVVKPILEGVELTHKTFVDAVSKFGLKEINPEGEAFNPEFHQAMSIQESPDHESNTVMFVMQKGYELNGRVVRPAMVMVAK</sequence>
<comment type="function">
    <text evidence="1">Participates actively in the response to hyperosmotic and heat shock by preventing the aggregation of stress-denatured proteins, in association with DnaK and GrpE. It is the nucleotide exchange factor for DnaK and may function as a thermosensor. Unfolded proteins bind initially to DnaJ; upon interaction with the DnaJ-bound protein, DnaK hydrolyzes its bound ATP, resulting in the formation of a stable complex. GrpE releases ADP from DnaK; ATP binding to DnaK triggers the release of the substrate protein, thus completing the reaction cycle. Several rounds of ATP-dependent interactions between DnaJ, DnaK and GrpE are required for fully efficient folding.</text>
</comment>
<comment type="subunit">
    <text evidence="1">Homodimer.</text>
</comment>
<comment type="subcellular location">
    <subcellularLocation>
        <location evidence="1">Cytoplasm</location>
    </subcellularLocation>
</comment>
<comment type="similarity">
    <text evidence="1">Belongs to the GrpE family.</text>
</comment>
<proteinExistence type="inferred from homology"/>
<organism>
    <name type="scientific">Vibrio harveyi</name>
    <name type="common">Beneckea harveyi</name>
    <dbReference type="NCBI Taxonomy" id="669"/>
    <lineage>
        <taxon>Bacteria</taxon>
        <taxon>Pseudomonadati</taxon>
        <taxon>Pseudomonadota</taxon>
        <taxon>Gammaproteobacteria</taxon>
        <taxon>Vibrionales</taxon>
        <taxon>Vibrionaceae</taxon>
        <taxon>Vibrio</taxon>
    </lineage>
</organism>